<sequence>MECVVPFRRCFCLNPPETRHRIVNHNHRNLHISLSSSSFASGILPLSNKKYRFVGPLAQRSSLHRRTDSLKHLPFSVNASVIGNSEEEVEEEDDDGDWEAEFLGEIDPLDIQPPKKRKKQKNSKALEDTEGMDWCVRARKIALKSIEARGLSSRMAEVMPLKKKKKKKSKKVIVKKDKVKSKSIPEDDFDTEDEDLDFEDGFVEDKMGDLRKRVSSLAGGMFEEKKEKMKEQLAQRLSQFSGPSDRMKEINLNKAIIEAQTAEEVLEVTAETIMAVAKGLSPSPLSPLNIATALHRIAKNMEKVSMMRTRRLAFARQREMSMLVALAMTCLPECSAQGISNISWALSKIGGELLYLTEMDRVAEVATSKVGEFNSQNVANIAGAFASMRHSAPELFAELSKRASTIINTFKGQEIAQLLWSFASLYEPADPLLESLDSAFKSSDQFKCYLTKEITNSDEVVDAEVSDDVSRSPALSFNRDQLGNIAWSYAVLGQVERPFFANIWNTLTTLEEQRLSEQYREDVMFASQVYLVNQCLKLECPHLQLSLCQELEEKISRAGKTKRFNQKITSSFQKEVGRLLISTGLDWAKEHDVDGYTVDVALVEKKVALEIDGPTHFSRNSGLPLGHTMLKRRYVAAAGWKVVSLSLQEWEEHEGSHEQLEYLREILTGCI</sequence>
<evidence type="ECO:0000255" key="1"/>
<evidence type="ECO:0000255" key="2">
    <source>
        <dbReference type="PROSITE-ProRule" id="PRU00619"/>
    </source>
</evidence>
<evidence type="ECO:0000269" key="3">
    <source>
    </source>
</evidence>
<evidence type="ECO:0000269" key="4">
    <source>
    </source>
</evidence>
<evidence type="ECO:0000303" key="5">
    <source>
    </source>
</evidence>
<evidence type="ECO:0000305" key="6"/>
<evidence type="ECO:0000312" key="7">
    <source>
        <dbReference type="Araport" id="AT2G31890"/>
    </source>
</evidence>
<reference key="1">
    <citation type="journal article" date="1999" name="Nature">
        <title>Sequence and analysis of chromosome 2 of the plant Arabidopsis thaliana.</title>
        <authorList>
            <person name="Lin X."/>
            <person name="Kaul S."/>
            <person name="Rounsley S.D."/>
            <person name="Shea T.P."/>
            <person name="Benito M.-I."/>
            <person name="Town C.D."/>
            <person name="Fujii C.Y."/>
            <person name="Mason T.M."/>
            <person name="Bowman C.L."/>
            <person name="Barnstead M.E."/>
            <person name="Feldblyum T.V."/>
            <person name="Buell C.R."/>
            <person name="Ketchum K.A."/>
            <person name="Lee J.J."/>
            <person name="Ronning C.M."/>
            <person name="Koo H.L."/>
            <person name="Moffat K.S."/>
            <person name="Cronin L.A."/>
            <person name="Shen M."/>
            <person name="Pai G."/>
            <person name="Van Aken S."/>
            <person name="Umayam L."/>
            <person name="Tallon L.J."/>
            <person name="Gill J.E."/>
            <person name="Adams M.D."/>
            <person name="Carrera A.J."/>
            <person name="Creasy T.H."/>
            <person name="Goodman H.M."/>
            <person name="Somerville C.R."/>
            <person name="Copenhaver G.P."/>
            <person name="Preuss D."/>
            <person name="Nierman W.C."/>
            <person name="White O."/>
            <person name="Eisen J.A."/>
            <person name="Salzberg S.L."/>
            <person name="Fraser C.M."/>
            <person name="Venter J.C."/>
        </authorList>
    </citation>
    <scope>NUCLEOTIDE SEQUENCE [LARGE SCALE GENOMIC DNA]</scope>
    <source>
        <strain>cv. Columbia</strain>
    </source>
</reference>
<reference key="2">
    <citation type="journal article" date="2017" name="Plant J.">
        <title>Araport11: a complete reannotation of the Arabidopsis thaliana reference genome.</title>
        <authorList>
            <person name="Cheng C.Y."/>
            <person name="Krishnakumar V."/>
            <person name="Chan A.P."/>
            <person name="Thibaud-Nissen F."/>
            <person name="Schobel S."/>
            <person name="Town C.D."/>
        </authorList>
    </citation>
    <scope>GENOME REANNOTATION</scope>
    <source>
        <strain>cv. Columbia</strain>
    </source>
</reference>
<reference key="3">
    <citation type="journal article" date="2003" name="Science">
        <title>Empirical analysis of transcriptional activity in the Arabidopsis genome.</title>
        <authorList>
            <person name="Yamada K."/>
            <person name="Lim J."/>
            <person name="Dale J.M."/>
            <person name="Chen H."/>
            <person name="Shinn P."/>
            <person name="Palm C.J."/>
            <person name="Southwick A.M."/>
            <person name="Wu H.C."/>
            <person name="Kim C.J."/>
            <person name="Nguyen M."/>
            <person name="Pham P.K."/>
            <person name="Cheuk R.F."/>
            <person name="Karlin-Newmann G."/>
            <person name="Liu S.X."/>
            <person name="Lam B."/>
            <person name="Sakano H."/>
            <person name="Wu T."/>
            <person name="Yu G."/>
            <person name="Miranda M."/>
            <person name="Quach H.L."/>
            <person name="Tripp M."/>
            <person name="Chang C.H."/>
            <person name="Lee J.M."/>
            <person name="Toriumi M.J."/>
            <person name="Chan M.M."/>
            <person name="Tang C.C."/>
            <person name="Onodera C.S."/>
            <person name="Deng J.M."/>
            <person name="Akiyama K."/>
            <person name="Ansari Y."/>
            <person name="Arakawa T."/>
            <person name="Banh J."/>
            <person name="Banno F."/>
            <person name="Bowser L."/>
            <person name="Brooks S.Y."/>
            <person name="Carninci P."/>
            <person name="Chao Q."/>
            <person name="Choy N."/>
            <person name="Enju A."/>
            <person name="Goldsmith A.D."/>
            <person name="Gurjal M."/>
            <person name="Hansen N.F."/>
            <person name="Hayashizaki Y."/>
            <person name="Johnson-Hopson C."/>
            <person name="Hsuan V.W."/>
            <person name="Iida K."/>
            <person name="Karnes M."/>
            <person name="Khan S."/>
            <person name="Koesema E."/>
            <person name="Ishida J."/>
            <person name="Jiang P.X."/>
            <person name="Jones T."/>
            <person name="Kawai J."/>
            <person name="Kamiya A."/>
            <person name="Meyers C."/>
            <person name="Nakajima M."/>
            <person name="Narusaka M."/>
            <person name="Seki M."/>
            <person name="Sakurai T."/>
            <person name="Satou M."/>
            <person name="Tamse R."/>
            <person name="Vaysberg M."/>
            <person name="Wallender E.K."/>
            <person name="Wong C."/>
            <person name="Yamamura Y."/>
            <person name="Yuan S."/>
            <person name="Shinozaki K."/>
            <person name="Davis R.W."/>
            <person name="Theologis A."/>
            <person name="Ecker J.R."/>
        </authorList>
    </citation>
    <scope>NUCLEOTIDE SEQUENCE [LARGE SCALE MRNA]</scope>
    <source>
        <strain>cv. Columbia</strain>
    </source>
</reference>
<reference key="4">
    <citation type="journal article" date="2007" name="Genes Dev.">
        <title>A novel class of bacteria-induced small RNAs in Arabidopsis.</title>
        <authorList>
            <person name="Katiyar-Agarwal S."/>
            <person name="Gao S."/>
            <person name="Vivian-Smith A."/>
            <person name="Jin H."/>
        </authorList>
    </citation>
    <scope>NUCLEOTIDE SEQUENCE [MRNA] OF 623-671</scope>
    <scope>FUNCTION</scope>
    <scope>INDUCTION</scope>
    <scope>DISRUPTION PHENOTYPE</scope>
</reference>
<reference key="5">
    <citation type="journal article" date="2009" name="Plant Physiol.">
        <title>Large-scale Arabidopsis phosphoproteome profiling reveals novel chloroplast kinase substrates and phosphorylation networks.</title>
        <authorList>
            <person name="Reiland S."/>
            <person name="Messerli G."/>
            <person name="Baerenfaller K."/>
            <person name="Gerrits B."/>
            <person name="Endler A."/>
            <person name="Grossmann J."/>
            <person name="Gruissem W."/>
            <person name="Baginsky S."/>
        </authorList>
    </citation>
    <scope>IDENTIFICATION BY MASS SPECTROMETRY [LARGE SCALE ANALYSIS]</scope>
</reference>
<reference key="6">
    <citation type="journal article" date="2014" name="Plant Cell">
        <title>RAP, the sole octotricopeptide repeat protein in Arabidopsis, is required for chloroplast 16S rRNA maturation.</title>
        <authorList>
            <person name="Kleinknecht L."/>
            <person name="Wang F."/>
            <person name="Stuebe R."/>
            <person name="Philippar K."/>
            <person name="Nickelsen J."/>
            <person name="Bohne A.V."/>
        </authorList>
    </citation>
    <scope>FUNCTION</scope>
    <scope>SUBCELLULAR LOCATION</scope>
    <scope>DISRUPTION PHENOTYPE</scope>
</reference>
<gene>
    <name evidence="5" type="primary">RAP</name>
    <name evidence="7" type="ordered locus">At2g31890</name>
</gene>
<accession>Q8VZE7</accession>
<accession>A8W8T7</accession>
<accession>Q9SKB1</accession>
<keyword id="KW-0150">Chloroplast</keyword>
<keyword id="KW-0611">Plant defense</keyword>
<keyword id="KW-0934">Plastid</keyword>
<keyword id="KW-1185">Reference proteome</keyword>
<keyword id="KW-0694">RNA-binding</keyword>
<keyword id="KW-0698">rRNA processing</keyword>
<keyword id="KW-0809">Transit peptide</keyword>
<protein>
    <recommendedName>
        <fullName evidence="6">RAP domain-containing protein, chloroplastic</fullName>
        <shortName evidence="5">AtRAP</shortName>
    </recommendedName>
</protein>
<feature type="transit peptide" description="Chloroplast" evidence="1">
    <location>
        <begin position="1"/>
        <end position="78"/>
    </location>
</feature>
<feature type="chain" id="PRO_0000438500" description="RAP domain-containing protein, chloroplastic" evidence="1">
    <location>
        <begin position="79"/>
        <end position="671"/>
    </location>
</feature>
<feature type="domain" description="RAP" evidence="2">
    <location>
        <begin position="607"/>
        <end position="665"/>
    </location>
</feature>
<comment type="function">
    <text evidence="3 4">RNA-binding protein required for chloroplast 16S rRNA maturation, an important process which supports chloroplast gene expression and biogenesis. Binds to 16S rRNA precursor and is involved in its 5'-end processing (PubMed:24585838). May act as negative regulator of defense response against bacterial pathogens (PubMed:18003861).</text>
</comment>
<comment type="subcellular location">
    <subcellularLocation>
        <location evidence="4">Plastid</location>
        <location evidence="4">Chloroplast stroma</location>
        <location evidence="4">Chloroplast nucleoid</location>
    </subcellularLocation>
</comment>
<comment type="induction">
    <text evidence="3">Down-regulated during infection with the bacterial pathogen Pseudomonas syringae pv. tomato avirulent avrRpt2 strain.</text>
</comment>
<comment type="disruption phenotype">
    <text evidence="3 4">Retarded growth and photobleaching phenotype (PubMed:18003861, PubMed:24585838). Enhanced resistance to the bacterial pathogen Pseudomonas syringae pv. tomato (PubMed:18003861).</text>
</comment>
<comment type="sequence caution" evidence="6">
    <conflict type="erroneous gene model prediction">
        <sequence resource="EMBL-CDS" id="AAD32283"/>
    </conflict>
</comment>
<name>RAP_ARATH</name>
<dbReference type="EMBL" id="AC006533">
    <property type="protein sequence ID" value="AAD32283.1"/>
    <property type="status" value="ALT_SEQ"/>
    <property type="molecule type" value="Genomic_DNA"/>
</dbReference>
<dbReference type="EMBL" id="CP002685">
    <property type="protein sequence ID" value="AEC08600.1"/>
    <property type="molecule type" value="Genomic_DNA"/>
</dbReference>
<dbReference type="EMBL" id="AY065010">
    <property type="protein sequence ID" value="AAL57655.1"/>
    <property type="molecule type" value="mRNA"/>
</dbReference>
<dbReference type="EMBL" id="AY129492">
    <property type="protein sequence ID" value="AAM91078.1"/>
    <property type="molecule type" value="mRNA"/>
</dbReference>
<dbReference type="EMBL" id="EU199905">
    <property type="protein sequence ID" value="ABW77414.1"/>
    <property type="molecule type" value="mRNA"/>
</dbReference>
<dbReference type="PIR" id="D84726">
    <property type="entry name" value="D84726"/>
</dbReference>
<dbReference type="RefSeq" id="NP_850176.1">
    <property type="nucleotide sequence ID" value="NM_179845.4"/>
</dbReference>
<dbReference type="SMR" id="Q8VZE7"/>
<dbReference type="FunCoup" id="Q8VZE7">
    <property type="interactions" value="1302"/>
</dbReference>
<dbReference type="STRING" id="3702.Q8VZE7"/>
<dbReference type="iPTMnet" id="Q8VZE7"/>
<dbReference type="PaxDb" id="3702-AT2G31890.1"/>
<dbReference type="ProteomicsDB" id="225919"/>
<dbReference type="EnsemblPlants" id="AT2G31890.1">
    <property type="protein sequence ID" value="AT2G31890.1"/>
    <property type="gene ID" value="AT2G31890"/>
</dbReference>
<dbReference type="GeneID" id="817747"/>
<dbReference type="Gramene" id="AT2G31890.1">
    <property type="protein sequence ID" value="AT2G31890.1"/>
    <property type="gene ID" value="AT2G31890"/>
</dbReference>
<dbReference type="KEGG" id="ath:AT2G31890"/>
<dbReference type="Araport" id="AT2G31890"/>
<dbReference type="TAIR" id="AT2G31890">
    <property type="gene designation" value="RAP"/>
</dbReference>
<dbReference type="eggNOG" id="ENOG502QUHX">
    <property type="taxonomic scope" value="Eukaryota"/>
</dbReference>
<dbReference type="HOGENOM" id="CLU_028932_0_0_1"/>
<dbReference type="InParanoid" id="Q8VZE7"/>
<dbReference type="OMA" id="FSHVWRT"/>
<dbReference type="OrthoDB" id="385235at2759"/>
<dbReference type="PhylomeDB" id="Q8VZE7"/>
<dbReference type="PRO" id="PR:Q8VZE7"/>
<dbReference type="Proteomes" id="UP000006548">
    <property type="component" value="Chromosome 2"/>
</dbReference>
<dbReference type="ExpressionAtlas" id="Q8VZE7">
    <property type="expression patterns" value="baseline and differential"/>
</dbReference>
<dbReference type="GO" id="GO:0042644">
    <property type="term" value="C:chloroplast nucleoid"/>
    <property type="evidence" value="ECO:0007669"/>
    <property type="project" value="UniProtKB-SubCell"/>
</dbReference>
<dbReference type="GO" id="GO:0042646">
    <property type="term" value="C:plastid nucleoid"/>
    <property type="evidence" value="ECO:0000314"/>
    <property type="project" value="TAIR"/>
</dbReference>
<dbReference type="GO" id="GO:0003723">
    <property type="term" value="F:RNA binding"/>
    <property type="evidence" value="ECO:0000314"/>
    <property type="project" value="TAIR"/>
</dbReference>
<dbReference type="GO" id="GO:1901259">
    <property type="term" value="P:chloroplast rRNA processing"/>
    <property type="evidence" value="ECO:0000315"/>
    <property type="project" value="TAIR"/>
</dbReference>
<dbReference type="GO" id="GO:0006952">
    <property type="term" value="P:defense response"/>
    <property type="evidence" value="ECO:0007669"/>
    <property type="project" value="UniProtKB-KW"/>
</dbReference>
<dbReference type="Gene3D" id="3.40.960.10">
    <property type="entry name" value="VSR Endonuclease"/>
    <property type="match status" value="1"/>
</dbReference>
<dbReference type="InterPro" id="IPR050870">
    <property type="entry name" value="FAST_kinase"/>
</dbReference>
<dbReference type="InterPro" id="IPR013584">
    <property type="entry name" value="RAP"/>
</dbReference>
<dbReference type="PANTHER" id="PTHR21228">
    <property type="entry name" value="FAST LEU-RICH DOMAIN-CONTAINING"/>
    <property type="match status" value="1"/>
</dbReference>
<dbReference type="PANTHER" id="PTHR21228:SF40">
    <property type="entry name" value="LD45607P"/>
    <property type="match status" value="1"/>
</dbReference>
<dbReference type="Pfam" id="PF08373">
    <property type="entry name" value="RAP"/>
    <property type="match status" value="1"/>
</dbReference>
<dbReference type="SMART" id="SM00952">
    <property type="entry name" value="RAP"/>
    <property type="match status" value="1"/>
</dbReference>
<dbReference type="PROSITE" id="PS51286">
    <property type="entry name" value="RAP"/>
    <property type="match status" value="1"/>
</dbReference>
<proteinExistence type="evidence at protein level"/>
<organism>
    <name type="scientific">Arabidopsis thaliana</name>
    <name type="common">Mouse-ear cress</name>
    <dbReference type="NCBI Taxonomy" id="3702"/>
    <lineage>
        <taxon>Eukaryota</taxon>
        <taxon>Viridiplantae</taxon>
        <taxon>Streptophyta</taxon>
        <taxon>Embryophyta</taxon>
        <taxon>Tracheophyta</taxon>
        <taxon>Spermatophyta</taxon>
        <taxon>Magnoliopsida</taxon>
        <taxon>eudicotyledons</taxon>
        <taxon>Gunneridae</taxon>
        <taxon>Pentapetalae</taxon>
        <taxon>rosids</taxon>
        <taxon>malvids</taxon>
        <taxon>Brassicales</taxon>
        <taxon>Brassicaceae</taxon>
        <taxon>Camelineae</taxon>
        <taxon>Arabidopsis</taxon>
    </lineage>
</organism>